<organism>
    <name type="scientific">Porphyra purpurea</name>
    <name type="common">Red seaweed</name>
    <name type="synonym">Ulva purpurea</name>
    <dbReference type="NCBI Taxonomy" id="2787"/>
    <lineage>
        <taxon>Eukaryota</taxon>
        <taxon>Rhodophyta</taxon>
        <taxon>Bangiophyceae</taxon>
        <taxon>Bangiales</taxon>
        <taxon>Bangiaceae</taxon>
        <taxon>Porphyra</taxon>
    </lineage>
</organism>
<dbReference type="EMBL" id="U38804">
    <property type="protein sequence ID" value="AAC08274.1"/>
    <property type="molecule type" value="Genomic_DNA"/>
</dbReference>
<dbReference type="PIR" id="S73309">
    <property type="entry name" value="S73309"/>
</dbReference>
<dbReference type="RefSeq" id="NP_053998.1">
    <property type="nucleotide sequence ID" value="NC_000925.1"/>
</dbReference>
<dbReference type="SMR" id="P51388"/>
<dbReference type="GeneID" id="810029"/>
<dbReference type="GO" id="GO:0009535">
    <property type="term" value="C:chloroplast thylakoid membrane"/>
    <property type="evidence" value="ECO:0007669"/>
    <property type="project" value="UniProtKB-SubCell"/>
</dbReference>
<dbReference type="GO" id="GO:0009539">
    <property type="term" value="C:photosystem II reaction center"/>
    <property type="evidence" value="ECO:0007669"/>
    <property type="project" value="InterPro"/>
</dbReference>
<dbReference type="GO" id="GO:0015979">
    <property type="term" value="P:photosynthesis"/>
    <property type="evidence" value="ECO:0007669"/>
    <property type="project" value="UniProtKB-UniRule"/>
</dbReference>
<dbReference type="Gene3D" id="6.10.250.2070">
    <property type="match status" value="1"/>
</dbReference>
<dbReference type="HAMAP" id="MF_01305">
    <property type="entry name" value="PSII_PsbJ"/>
    <property type="match status" value="1"/>
</dbReference>
<dbReference type="InterPro" id="IPR002682">
    <property type="entry name" value="PSII_PsbJ"/>
</dbReference>
<dbReference type="InterPro" id="IPR037267">
    <property type="entry name" value="PSII_PsbJ_sf"/>
</dbReference>
<dbReference type="NCBIfam" id="NF002722">
    <property type="entry name" value="PRK02565.1"/>
    <property type="match status" value="1"/>
</dbReference>
<dbReference type="PANTHER" id="PTHR34812">
    <property type="entry name" value="PHOTOSYSTEM II REACTION CENTER PROTEIN J"/>
    <property type="match status" value="1"/>
</dbReference>
<dbReference type="PANTHER" id="PTHR34812:SF3">
    <property type="entry name" value="PHOTOSYSTEM II REACTION CENTER PROTEIN J"/>
    <property type="match status" value="1"/>
</dbReference>
<dbReference type="Pfam" id="PF01788">
    <property type="entry name" value="PsbJ"/>
    <property type="match status" value="1"/>
</dbReference>
<dbReference type="SUPFAM" id="SSF161021">
    <property type="entry name" value="Photosystem II reaction center protein J, PsbJ"/>
    <property type="match status" value="1"/>
</dbReference>
<protein>
    <recommendedName>
        <fullName evidence="1">Photosystem II reaction center protein J</fullName>
        <shortName evidence="1">PSII-J</shortName>
    </recommendedName>
</protein>
<evidence type="ECO:0000255" key="1">
    <source>
        <dbReference type="HAMAP-Rule" id="MF_01305"/>
    </source>
</evidence>
<geneLocation type="chloroplast"/>
<proteinExistence type="inferred from homology"/>
<feature type="chain" id="PRO_0000216614" description="Photosystem II reaction center protein J">
    <location>
        <begin position="1"/>
        <end position="39"/>
    </location>
</feature>
<feature type="transmembrane region" description="Helical" evidence="1">
    <location>
        <begin position="9"/>
        <end position="29"/>
    </location>
</feature>
<comment type="function">
    <text evidence="1">One of the components of the core complex of photosystem II (PSII). PSII is a light-driven water:plastoquinone oxidoreductase that uses light energy to abstract electrons from H(2)O, generating O(2) and a proton gradient subsequently used for ATP formation. It consists of a core antenna complex that captures photons, and an electron transfer chain that converts photonic excitation into a charge separation.</text>
</comment>
<comment type="subunit">
    <text evidence="1">PSII is composed of 1 copy each of membrane proteins PsbA, PsbB, PsbC, PsbD, PsbE, PsbF, PsbH, PsbI, PsbJ, PsbK, PsbL, PsbM, PsbT, PsbX, PsbY, PsbZ, Psb30/Ycf12, at least 3 peripheral proteins of the oxygen-evolving complex and a large number of cofactors. It forms dimeric complexes.</text>
</comment>
<comment type="subcellular location">
    <subcellularLocation>
        <location evidence="1">Plastid</location>
        <location evidence="1">Chloroplast thylakoid membrane</location>
        <topology evidence="1">Single-pass membrane protein</topology>
    </subcellularLocation>
</comment>
<comment type="similarity">
    <text evidence="1">Belongs to the PsbJ family.</text>
</comment>
<keyword id="KW-0150">Chloroplast</keyword>
<keyword id="KW-0472">Membrane</keyword>
<keyword id="KW-0602">Photosynthesis</keyword>
<keyword id="KW-0604">Photosystem II</keyword>
<keyword id="KW-0934">Plastid</keyword>
<keyword id="KW-0674">Reaction center</keyword>
<keyword id="KW-0793">Thylakoid</keyword>
<keyword id="KW-0812">Transmembrane</keyword>
<keyword id="KW-1133">Transmembrane helix</keyword>
<accession>P51388</accession>
<name>PSBJ_PORPU</name>
<gene>
    <name evidence="1" type="primary">psbJ</name>
</gene>
<reference key="1">
    <citation type="journal article" date="1995" name="Plant Mol. Biol. Rep.">
        <title>Complete nucleotide sequence of the Porphyra purpurea chloroplast genome.</title>
        <authorList>
            <person name="Reith M.E."/>
            <person name="Munholland J."/>
        </authorList>
    </citation>
    <scope>NUCLEOTIDE SEQUENCE [LARGE SCALE GENOMIC DNA]</scope>
    <source>
        <strain>Avonport</strain>
    </source>
</reference>
<sequence length="39" mass="3888">MAGTGRIPLWLVATVGGMAAITVLGIFIYGSYSGVGSSL</sequence>